<feature type="chain" id="PRO_0000216342" description="Probable ketoamine kinase YniA">
    <location>
        <begin position="1"/>
        <end position="286"/>
    </location>
</feature>
<feature type="active site" description="Proton acceptor" evidence="1">
    <location>
        <position position="193"/>
    </location>
</feature>
<feature type="binding site" evidence="3">
    <location>
        <begin position="91"/>
        <end position="93"/>
    </location>
    <ligand>
        <name>ATP</name>
        <dbReference type="ChEBI" id="CHEBI:30616"/>
    </ligand>
</feature>
<comment type="function">
    <text evidence="2 4">Ketoamine kinase that phosphorylates ketoamines on the third carbon of the sugar moiety to generate ketoamine 3-phosphate (By similarity). Its precise substrate are unknown: does not have ribulosamine and/or erythrulosamine 3-kinase activity in vitro (PubMed:17681011).</text>
</comment>
<comment type="similarity">
    <text evidence="5">Belongs to the fructosamine kinase family.</text>
</comment>
<name>KT3K_ECOLI</name>
<sequence length="286" mass="32459">MWQAISRLLSEQLGEGEIELRNELPGGEVHAAWHLRYAGHDFFVKCDERELLPGFTAEADQLELLSRSKTVTVPKVWAVGADRDYSFLVMDYLPPRPLDAHSAFILGQQIARLHQWSDQPQFGLDFDNALSTTPQPNTWQRRWSTFFAEQRIGWQLELAAEKGIAFGNIDAIVEHIQQRLASHQPQPSLLHGDLWSGNCALGPDGPYIFDPACYWGDRECDLAMLPLHTEQPPQIYDGYQSVSPLPADFLERQPVYQLYTLLNRARLFGGQHLVIAQQSLDRLLAA</sequence>
<keyword id="KW-0067">ATP-binding</keyword>
<keyword id="KW-0418">Kinase</keyword>
<keyword id="KW-0547">Nucleotide-binding</keyword>
<keyword id="KW-1185">Reference proteome</keyword>
<keyword id="KW-0808">Transferase</keyword>
<evidence type="ECO:0000250" key="1">
    <source>
        <dbReference type="UniProtKB" id="P9WI99"/>
    </source>
</evidence>
<evidence type="ECO:0000250" key="2">
    <source>
        <dbReference type="UniProtKB" id="Q9H479"/>
    </source>
</evidence>
<evidence type="ECO:0000250" key="3">
    <source>
        <dbReference type="UniProtKB" id="Q9HA64"/>
    </source>
</evidence>
<evidence type="ECO:0000269" key="4">
    <source>
    </source>
</evidence>
<evidence type="ECO:0000305" key="5"/>
<organism>
    <name type="scientific">Escherichia coli (strain K12)</name>
    <dbReference type="NCBI Taxonomy" id="83333"/>
    <lineage>
        <taxon>Bacteria</taxon>
        <taxon>Pseudomonadati</taxon>
        <taxon>Pseudomonadota</taxon>
        <taxon>Gammaproteobacteria</taxon>
        <taxon>Enterobacterales</taxon>
        <taxon>Enterobacteriaceae</taxon>
        <taxon>Escherichia</taxon>
    </lineage>
</organism>
<reference key="1">
    <citation type="journal article" date="1996" name="DNA Res.">
        <title>A 570-kb DNA sequence of the Escherichia coli K-12 genome corresponding to the 28.0-40.1 min region on the linkage map.</title>
        <authorList>
            <person name="Aiba H."/>
            <person name="Baba T."/>
            <person name="Fujita K."/>
            <person name="Hayashi K."/>
            <person name="Inada T."/>
            <person name="Isono K."/>
            <person name="Itoh T."/>
            <person name="Kasai H."/>
            <person name="Kashimoto K."/>
            <person name="Kimura S."/>
            <person name="Kitakawa M."/>
            <person name="Kitagawa M."/>
            <person name="Makino K."/>
            <person name="Miki T."/>
            <person name="Mizobuchi K."/>
            <person name="Mori H."/>
            <person name="Mori T."/>
            <person name="Motomura K."/>
            <person name="Nakade S."/>
            <person name="Nakamura Y."/>
            <person name="Nashimoto H."/>
            <person name="Nishio Y."/>
            <person name="Oshima T."/>
            <person name="Saito N."/>
            <person name="Sampei G."/>
            <person name="Seki Y."/>
            <person name="Sivasundaram S."/>
            <person name="Tagami H."/>
            <person name="Takeda J."/>
            <person name="Takemoto K."/>
            <person name="Takeuchi Y."/>
            <person name="Wada C."/>
            <person name="Yamamoto Y."/>
            <person name="Horiuchi T."/>
        </authorList>
    </citation>
    <scope>NUCLEOTIDE SEQUENCE [LARGE SCALE GENOMIC DNA]</scope>
    <source>
        <strain>K12 / W3110 / ATCC 27325 / DSM 5911</strain>
    </source>
</reference>
<reference key="2">
    <citation type="journal article" date="1997" name="Science">
        <title>The complete genome sequence of Escherichia coli K-12.</title>
        <authorList>
            <person name="Blattner F.R."/>
            <person name="Plunkett G. III"/>
            <person name="Bloch C.A."/>
            <person name="Perna N.T."/>
            <person name="Burland V."/>
            <person name="Riley M."/>
            <person name="Collado-Vides J."/>
            <person name="Glasner J.D."/>
            <person name="Rode C.K."/>
            <person name="Mayhew G.F."/>
            <person name="Gregor J."/>
            <person name="Davis N.W."/>
            <person name="Kirkpatrick H.A."/>
            <person name="Goeden M.A."/>
            <person name="Rose D.J."/>
            <person name="Mau B."/>
            <person name="Shao Y."/>
        </authorList>
    </citation>
    <scope>NUCLEOTIDE SEQUENCE [LARGE SCALE GENOMIC DNA]</scope>
    <source>
        <strain>K12 / MG1655 / ATCC 47076</strain>
    </source>
</reference>
<reference key="3">
    <citation type="journal article" date="2006" name="Mol. Syst. Biol.">
        <title>Highly accurate genome sequences of Escherichia coli K-12 strains MG1655 and W3110.</title>
        <authorList>
            <person name="Hayashi K."/>
            <person name="Morooka N."/>
            <person name="Yamamoto Y."/>
            <person name="Fujita K."/>
            <person name="Isono K."/>
            <person name="Choi S."/>
            <person name="Ohtsubo E."/>
            <person name="Baba T."/>
            <person name="Wanner B.L."/>
            <person name="Mori H."/>
            <person name="Horiuchi T."/>
        </authorList>
    </citation>
    <scope>NUCLEOTIDE SEQUENCE [LARGE SCALE GENOMIC DNA]</scope>
    <source>
        <strain>K12 / W3110 / ATCC 27325 / DSM 5911</strain>
    </source>
</reference>
<reference key="4">
    <citation type="journal article" date="2007" name="FEBS J.">
        <title>Many fructosamine 3-kinase homologues in bacteria are ribulosamine/erythrulosamine 3-kinases potentially involved in protein deglycation.</title>
        <authorList>
            <person name="Gemayel R."/>
            <person name="Fortpied J."/>
            <person name="Rzem R."/>
            <person name="Vertommen D."/>
            <person name="Veiga-da-Cunha M."/>
            <person name="Van Schaftingen E."/>
        </authorList>
    </citation>
    <scope>FUNCTION</scope>
</reference>
<proteinExistence type="inferred from homology"/>
<gene>
    <name type="primary">yniA</name>
    <name type="ordered locus">b1725</name>
    <name type="ordered locus">JW1714</name>
</gene>
<protein>
    <recommendedName>
        <fullName>Probable ketoamine kinase YniA</fullName>
        <ecNumber evidence="2">2.7.1.-</ecNumber>
    </recommendedName>
</protein>
<accession>P77739</accession>
<dbReference type="EC" id="2.7.1.-" evidence="2"/>
<dbReference type="EMBL" id="U00096">
    <property type="protein sequence ID" value="AAC74795.1"/>
    <property type="molecule type" value="Genomic_DNA"/>
</dbReference>
<dbReference type="EMBL" id="AP009048">
    <property type="protein sequence ID" value="BAA15501.1"/>
    <property type="molecule type" value="Genomic_DNA"/>
</dbReference>
<dbReference type="PIR" id="E64931">
    <property type="entry name" value="E64931"/>
</dbReference>
<dbReference type="RefSeq" id="NP_416239.1">
    <property type="nucleotide sequence ID" value="NC_000913.3"/>
</dbReference>
<dbReference type="RefSeq" id="WP_000267650.1">
    <property type="nucleotide sequence ID" value="NZ_SSZK01000001.1"/>
</dbReference>
<dbReference type="SMR" id="P77739"/>
<dbReference type="BioGRID" id="4263073">
    <property type="interactions" value="31"/>
</dbReference>
<dbReference type="DIP" id="DIP-12775N"/>
<dbReference type="FunCoup" id="P77739">
    <property type="interactions" value="512"/>
</dbReference>
<dbReference type="IntAct" id="P77739">
    <property type="interactions" value="6"/>
</dbReference>
<dbReference type="STRING" id="511145.b1725"/>
<dbReference type="jPOST" id="P77739"/>
<dbReference type="PaxDb" id="511145-b1725"/>
<dbReference type="EnsemblBacteria" id="AAC74795">
    <property type="protein sequence ID" value="AAC74795"/>
    <property type="gene ID" value="b1725"/>
</dbReference>
<dbReference type="GeneID" id="946236"/>
<dbReference type="KEGG" id="ecj:JW1714"/>
<dbReference type="KEGG" id="eco:b1725"/>
<dbReference type="KEGG" id="ecoc:C3026_09865"/>
<dbReference type="PATRIC" id="fig|1411691.4.peg.531"/>
<dbReference type="EchoBASE" id="EB3742"/>
<dbReference type="eggNOG" id="COG3001">
    <property type="taxonomic scope" value="Bacteria"/>
</dbReference>
<dbReference type="HOGENOM" id="CLU_036517_0_0_6"/>
<dbReference type="InParanoid" id="P77739"/>
<dbReference type="OMA" id="RECDIAM"/>
<dbReference type="OrthoDB" id="5291879at2"/>
<dbReference type="PhylomeDB" id="P77739"/>
<dbReference type="BioCyc" id="EcoCyc:G6930-MONOMER"/>
<dbReference type="PRO" id="PR:P77739"/>
<dbReference type="Proteomes" id="UP000000625">
    <property type="component" value="Chromosome"/>
</dbReference>
<dbReference type="GO" id="GO:0005524">
    <property type="term" value="F:ATP binding"/>
    <property type="evidence" value="ECO:0007669"/>
    <property type="project" value="UniProtKB-KW"/>
</dbReference>
<dbReference type="GO" id="GO:0016301">
    <property type="term" value="F:kinase activity"/>
    <property type="evidence" value="ECO:0007669"/>
    <property type="project" value="UniProtKB-KW"/>
</dbReference>
<dbReference type="FunFam" id="3.30.200.20:FF:000176">
    <property type="entry name" value="Fructosamine kinase family protein"/>
    <property type="match status" value="1"/>
</dbReference>
<dbReference type="FunFam" id="3.90.1200.10:FF:000001">
    <property type="entry name" value="Fructosamine kinase family protein"/>
    <property type="match status" value="1"/>
</dbReference>
<dbReference type="Gene3D" id="3.90.1200.10">
    <property type="match status" value="1"/>
</dbReference>
<dbReference type="Gene3D" id="3.30.200.20">
    <property type="entry name" value="Phosphorylase Kinase, domain 1"/>
    <property type="match status" value="1"/>
</dbReference>
<dbReference type="InterPro" id="IPR016477">
    <property type="entry name" value="Fructo-/Ketosamine-3-kinase"/>
</dbReference>
<dbReference type="InterPro" id="IPR011009">
    <property type="entry name" value="Kinase-like_dom_sf"/>
</dbReference>
<dbReference type="PANTHER" id="PTHR12149">
    <property type="entry name" value="FRUCTOSAMINE 3 KINASE-RELATED PROTEIN"/>
    <property type="match status" value="1"/>
</dbReference>
<dbReference type="PANTHER" id="PTHR12149:SF8">
    <property type="entry name" value="PROTEIN-RIBULOSAMINE 3-KINASE"/>
    <property type="match status" value="1"/>
</dbReference>
<dbReference type="Pfam" id="PF03881">
    <property type="entry name" value="Fructosamin_kin"/>
    <property type="match status" value="1"/>
</dbReference>
<dbReference type="PIRSF" id="PIRSF006221">
    <property type="entry name" value="Ketosamine-3-kinase"/>
    <property type="match status" value="1"/>
</dbReference>
<dbReference type="SUPFAM" id="SSF56112">
    <property type="entry name" value="Protein kinase-like (PK-like)"/>
    <property type="match status" value="1"/>
</dbReference>